<protein>
    <recommendedName>
        <fullName evidence="1">Glutamate racemase</fullName>
        <ecNumber evidence="1">5.1.1.3</ecNumber>
    </recommendedName>
</protein>
<gene>
    <name evidence="1" type="primary">murI</name>
    <name type="ordered locus">SF4049</name>
    <name type="ordered locus">S3695</name>
</gene>
<feature type="chain" id="PRO_0000095506" description="Glutamate racemase">
    <location>
        <begin position="1"/>
        <end position="285"/>
    </location>
</feature>
<feature type="active site" description="Proton donor/acceptor" evidence="1">
    <location>
        <position position="92"/>
    </location>
</feature>
<feature type="active site" description="Proton donor/acceptor" evidence="1">
    <location>
        <position position="204"/>
    </location>
</feature>
<feature type="binding site" evidence="1">
    <location>
        <begin position="28"/>
        <end position="29"/>
    </location>
    <ligand>
        <name>substrate</name>
    </ligand>
</feature>
<feature type="binding site" evidence="1">
    <location>
        <begin position="60"/>
        <end position="61"/>
    </location>
    <ligand>
        <name>substrate</name>
    </ligand>
</feature>
<feature type="binding site" evidence="1">
    <location>
        <begin position="93"/>
        <end position="94"/>
    </location>
    <ligand>
        <name>substrate</name>
    </ligand>
</feature>
<feature type="binding site" evidence="1">
    <location>
        <begin position="205"/>
        <end position="206"/>
    </location>
    <ligand>
        <name>substrate</name>
    </ligand>
</feature>
<keyword id="KW-0133">Cell shape</keyword>
<keyword id="KW-0961">Cell wall biogenesis/degradation</keyword>
<keyword id="KW-0413">Isomerase</keyword>
<keyword id="KW-0573">Peptidoglycan synthesis</keyword>
<keyword id="KW-1185">Reference proteome</keyword>
<evidence type="ECO:0000255" key="1">
    <source>
        <dbReference type="HAMAP-Rule" id="MF_00258"/>
    </source>
</evidence>
<evidence type="ECO:0000305" key="2"/>
<proteinExistence type="inferred from homology"/>
<dbReference type="EC" id="5.1.1.3" evidence="1"/>
<dbReference type="EMBL" id="AE005674">
    <property type="protein sequence ID" value="AAN45478.2"/>
    <property type="status" value="ALT_INIT"/>
    <property type="molecule type" value="Genomic_DNA"/>
</dbReference>
<dbReference type="EMBL" id="AE014073">
    <property type="protein sequence ID" value="AAP18724.1"/>
    <property type="status" value="ALT_INIT"/>
    <property type="molecule type" value="Genomic_DNA"/>
</dbReference>
<dbReference type="RefSeq" id="NP_709771.4">
    <property type="nucleotide sequence ID" value="NC_004337.2"/>
</dbReference>
<dbReference type="RefSeq" id="WP_000201819.1">
    <property type="nucleotide sequence ID" value="NZ_WPGW01000135.1"/>
</dbReference>
<dbReference type="SMR" id="P63634"/>
<dbReference type="STRING" id="198214.SF4049"/>
<dbReference type="PaxDb" id="198214-SF4049"/>
<dbReference type="GeneID" id="1025567"/>
<dbReference type="GeneID" id="93777926"/>
<dbReference type="KEGG" id="sfl:SF4049"/>
<dbReference type="KEGG" id="sfx:S3695"/>
<dbReference type="PATRIC" id="fig|198214.7.peg.4772"/>
<dbReference type="HOGENOM" id="CLU_052344_2_0_6"/>
<dbReference type="UniPathway" id="UPA00219"/>
<dbReference type="Proteomes" id="UP000001006">
    <property type="component" value="Chromosome"/>
</dbReference>
<dbReference type="Proteomes" id="UP000002673">
    <property type="component" value="Chromosome"/>
</dbReference>
<dbReference type="GO" id="GO:0008881">
    <property type="term" value="F:glutamate racemase activity"/>
    <property type="evidence" value="ECO:0007669"/>
    <property type="project" value="UniProtKB-UniRule"/>
</dbReference>
<dbReference type="GO" id="GO:0071555">
    <property type="term" value="P:cell wall organization"/>
    <property type="evidence" value="ECO:0007669"/>
    <property type="project" value="UniProtKB-KW"/>
</dbReference>
<dbReference type="GO" id="GO:0009252">
    <property type="term" value="P:peptidoglycan biosynthetic process"/>
    <property type="evidence" value="ECO:0007669"/>
    <property type="project" value="UniProtKB-UniRule"/>
</dbReference>
<dbReference type="GO" id="GO:0008360">
    <property type="term" value="P:regulation of cell shape"/>
    <property type="evidence" value="ECO:0007669"/>
    <property type="project" value="UniProtKB-KW"/>
</dbReference>
<dbReference type="FunFam" id="3.40.50.1860:FF:000002">
    <property type="entry name" value="Glutamate racemase"/>
    <property type="match status" value="1"/>
</dbReference>
<dbReference type="Gene3D" id="3.40.50.1860">
    <property type="match status" value="2"/>
</dbReference>
<dbReference type="HAMAP" id="MF_00258">
    <property type="entry name" value="Glu_racemase"/>
    <property type="match status" value="1"/>
</dbReference>
<dbReference type="InterPro" id="IPR015942">
    <property type="entry name" value="Asp/Glu/hydantoin_racemase"/>
</dbReference>
<dbReference type="InterPro" id="IPR001920">
    <property type="entry name" value="Asp/Glu_race"/>
</dbReference>
<dbReference type="InterPro" id="IPR018187">
    <property type="entry name" value="Asp/Glu_racemase_AS_1"/>
</dbReference>
<dbReference type="InterPro" id="IPR033134">
    <property type="entry name" value="Asp/Glu_racemase_AS_2"/>
</dbReference>
<dbReference type="InterPro" id="IPR004391">
    <property type="entry name" value="Glu_race"/>
</dbReference>
<dbReference type="NCBIfam" id="TIGR00067">
    <property type="entry name" value="glut_race"/>
    <property type="match status" value="1"/>
</dbReference>
<dbReference type="NCBIfam" id="NF002034">
    <property type="entry name" value="PRK00865.1-1"/>
    <property type="match status" value="1"/>
</dbReference>
<dbReference type="PANTHER" id="PTHR21198">
    <property type="entry name" value="GLUTAMATE RACEMASE"/>
    <property type="match status" value="1"/>
</dbReference>
<dbReference type="PANTHER" id="PTHR21198:SF2">
    <property type="entry name" value="GLUTAMATE RACEMASE"/>
    <property type="match status" value="1"/>
</dbReference>
<dbReference type="Pfam" id="PF01177">
    <property type="entry name" value="Asp_Glu_race"/>
    <property type="match status" value="1"/>
</dbReference>
<dbReference type="SUPFAM" id="SSF53681">
    <property type="entry name" value="Aspartate/glutamate racemase"/>
    <property type="match status" value="2"/>
</dbReference>
<dbReference type="PROSITE" id="PS00923">
    <property type="entry name" value="ASP_GLU_RACEMASE_1"/>
    <property type="match status" value="1"/>
</dbReference>
<dbReference type="PROSITE" id="PS00924">
    <property type="entry name" value="ASP_GLU_RACEMASE_2"/>
    <property type="match status" value="1"/>
</dbReference>
<organism>
    <name type="scientific">Shigella flexneri</name>
    <dbReference type="NCBI Taxonomy" id="623"/>
    <lineage>
        <taxon>Bacteria</taxon>
        <taxon>Pseudomonadati</taxon>
        <taxon>Pseudomonadota</taxon>
        <taxon>Gammaproteobacteria</taxon>
        <taxon>Enterobacterales</taxon>
        <taxon>Enterobacteriaceae</taxon>
        <taxon>Shigella</taxon>
    </lineage>
</organism>
<name>MURI_SHIFL</name>
<comment type="function">
    <text evidence="1">Provides the (R)-glutamate required for cell wall biosynthesis.</text>
</comment>
<comment type="catalytic activity">
    <reaction evidence="1">
        <text>L-glutamate = D-glutamate</text>
        <dbReference type="Rhea" id="RHEA:12813"/>
        <dbReference type="ChEBI" id="CHEBI:29985"/>
        <dbReference type="ChEBI" id="CHEBI:29986"/>
        <dbReference type="EC" id="5.1.1.3"/>
    </reaction>
</comment>
<comment type="pathway">
    <text evidence="1">Cell wall biogenesis; peptidoglycan biosynthesis.</text>
</comment>
<comment type="similarity">
    <text evidence="1">Belongs to the aspartate/glutamate racemases family.</text>
</comment>
<comment type="sequence caution" evidence="2">
    <conflict type="erroneous initiation">
        <sequence resource="EMBL-CDS" id="AAN45478"/>
    </conflict>
    <text>Truncated N-terminus.</text>
</comment>
<comment type="sequence caution" evidence="2">
    <conflict type="erroneous initiation">
        <sequence resource="EMBL-CDS" id="AAP18724"/>
    </conflict>
    <text>Truncated N-terminus.</text>
</comment>
<sequence>MATKLQDGNTPCLAATPSEPRPTVLVFDSGVGGLSVYDEIRHLLPDLHYIYAFDNVAFPYGEKSEAFIVERVVAIVTAVQERYPLALAVVACNTASTVSLPALREKFDFPVVGVVPAIKPAARLTANGIVGLLATRGTVKRSYTHELIARFANECQIEMLGSAEMVELAEAKLHGEDVSLDALKRILRPWLRMKEPPDTVVLGCTHFPLLQEELLQVLPEGTRLVDSGAAIARRTAWLLEHEAPDAKSADANIAFCMAMTPEAEQLLPVLQRYGFETLEKLAVLG</sequence>
<reference key="1">
    <citation type="journal article" date="2002" name="Nucleic Acids Res.">
        <title>Genome sequence of Shigella flexneri 2a: insights into pathogenicity through comparison with genomes of Escherichia coli K12 and O157.</title>
        <authorList>
            <person name="Jin Q."/>
            <person name="Yuan Z."/>
            <person name="Xu J."/>
            <person name="Wang Y."/>
            <person name="Shen Y."/>
            <person name="Lu W."/>
            <person name="Wang J."/>
            <person name="Liu H."/>
            <person name="Yang J."/>
            <person name="Yang F."/>
            <person name="Zhang X."/>
            <person name="Zhang J."/>
            <person name="Yang G."/>
            <person name="Wu H."/>
            <person name="Qu D."/>
            <person name="Dong J."/>
            <person name="Sun L."/>
            <person name="Xue Y."/>
            <person name="Zhao A."/>
            <person name="Gao Y."/>
            <person name="Zhu J."/>
            <person name="Kan B."/>
            <person name="Ding K."/>
            <person name="Chen S."/>
            <person name="Cheng H."/>
            <person name="Yao Z."/>
            <person name="He B."/>
            <person name="Chen R."/>
            <person name="Ma D."/>
            <person name="Qiang B."/>
            <person name="Wen Y."/>
            <person name="Hou Y."/>
            <person name="Yu J."/>
        </authorList>
    </citation>
    <scope>NUCLEOTIDE SEQUENCE [LARGE SCALE GENOMIC DNA]</scope>
    <source>
        <strain>301 / Serotype 2a</strain>
    </source>
</reference>
<reference key="2">
    <citation type="journal article" date="2003" name="Infect. Immun.">
        <title>Complete genome sequence and comparative genomics of Shigella flexneri serotype 2a strain 2457T.</title>
        <authorList>
            <person name="Wei J."/>
            <person name="Goldberg M.B."/>
            <person name="Burland V."/>
            <person name="Venkatesan M.M."/>
            <person name="Deng W."/>
            <person name="Fournier G."/>
            <person name="Mayhew G.F."/>
            <person name="Plunkett G. III"/>
            <person name="Rose D.J."/>
            <person name="Darling A."/>
            <person name="Mau B."/>
            <person name="Perna N.T."/>
            <person name="Payne S.M."/>
            <person name="Runyen-Janecky L.J."/>
            <person name="Zhou S."/>
            <person name="Schwartz D.C."/>
            <person name="Blattner F.R."/>
        </authorList>
    </citation>
    <scope>NUCLEOTIDE SEQUENCE [LARGE SCALE GENOMIC DNA]</scope>
    <source>
        <strain>ATCC 700930 / 2457T / Serotype 2a</strain>
    </source>
</reference>
<accession>P63634</accession>
<accession>Q8X713</accession>